<gene>
    <name evidence="1" type="primary">rplS</name>
    <name type="ordered locus">Rfer_1405</name>
</gene>
<proteinExistence type="inferred from homology"/>
<accession>Q21YL5</accession>
<keyword id="KW-1185">Reference proteome</keyword>
<keyword id="KW-0687">Ribonucleoprotein</keyword>
<keyword id="KW-0689">Ribosomal protein</keyword>
<protein>
    <recommendedName>
        <fullName evidence="1">Large ribosomal subunit protein bL19</fullName>
    </recommendedName>
    <alternativeName>
        <fullName evidence="2">50S ribosomal protein L19</fullName>
    </alternativeName>
</protein>
<reference key="1">
    <citation type="submission" date="2006-02" db="EMBL/GenBank/DDBJ databases">
        <title>Complete sequence of chromosome of Rhodoferax ferrireducens DSM 15236.</title>
        <authorList>
            <person name="Copeland A."/>
            <person name="Lucas S."/>
            <person name="Lapidus A."/>
            <person name="Barry K."/>
            <person name="Detter J.C."/>
            <person name="Glavina del Rio T."/>
            <person name="Hammon N."/>
            <person name="Israni S."/>
            <person name="Pitluck S."/>
            <person name="Brettin T."/>
            <person name="Bruce D."/>
            <person name="Han C."/>
            <person name="Tapia R."/>
            <person name="Gilna P."/>
            <person name="Kiss H."/>
            <person name="Schmutz J."/>
            <person name="Larimer F."/>
            <person name="Land M."/>
            <person name="Kyrpides N."/>
            <person name="Ivanova N."/>
            <person name="Richardson P."/>
        </authorList>
    </citation>
    <scope>NUCLEOTIDE SEQUENCE [LARGE SCALE GENOMIC DNA]</scope>
    <source>
        <strain>ATCC BAA-621 / DSM 15236 / T118</strain>
    </source>
</reference>
<feature type="chain" id="PRO_0000252534" description="Large ribosomal subunit protein bL19">
    <location>
        <begin position="1"/>
        <end position="126"/>
    </location>
</feature>
<sequence length="126" mass="14069">MNLIETLEQEEIARLGKIIPEFAPGDTVVVSVNVVEGARKRVQAYEGVVIAKRNRGLNSAFTVRKISSGEGVERTFQTYSPLIAAIEVKRRGDVRRAKLYYLRDRSGKSARIKEKLPARKIKTAAV</sequence>
<evidence type="ECO:0000255" key="1">
    <source>
        <dbReference type="HAMAP-Rule" id="MF_00402"/>
    </source>
</evidence>
<evidence type="ECO:0000305" key="2"/>
<organism>
    <name type="scientific">Albidiferax ferrireducens (strain ATCC BAA-621 / DSM 15236 / T118)</name>
    <name type="common">Rhodoferax ferrireducens</name>
    <dbReference type="NCBI Taxonomy" id="338969"/>
    <lineage>
        <taxon>Bacteria</taxon>
        <taxon>Pseudomonadati</taxon>
        <taxon>Pseudomonadota</taxon>
        <taxon>Betaproteobacteria</taxon>
        <taxon>Burkholderiales</taxon>
        <taxon>Comamonadaceae</taxon>
        <taxon>Rhodoferax</taxon>
    </lineage>
</organism>
<comment type="function">
    <text evidence="1">This protein is located at the 30S-50S ribosomal subunit interface and may play a role in the structure and function of the aminoacyl-tRNA binding site.</text>
</comment>
<comment type="similarity">
    <text evidence="1">Belongs to the bacterial ribosomal protein bL19 family.</text>
</comment>
<dbReference type="EMBL" id="CP000267">
    <property type="protein sequence ID" value="ABD69138.1"/>
    <property type="molecule type" value="Genomic_DNA"/>
</dbReference>
<dbReference type="RefSeq" id="WP_011463706.1">
    <property type="nucleotide sequence ID" value="NC_007908.1"/>
</dbReference>
<dbReference type="SMR" id="Q21YL5"/>
<dbReference type="STRING" id="338969.Rfer_1405"/>
<dbReference type="KEGG" id="rfr:Rfer_1405"/>
<dbReference type="eggNOG" id="COG0335">
    <property type="taxonomic scope" value="Bacteria"/>
</dbReference>
<dbReference type="HOGENOM" id="CLU_103507_1_0_4"/>
<dbReference type="OrthoDB" id="9803541at2"/>
<dbReference type="Proteomes" id="UP000008332">
    <property type="component" value="Chromosome"/>
</dbReference>
<dbReference type="GO" id="GO:0022625">
    <property type="term" value="C:cytosolic large ribosomal subunit"/>
    <property type="evidence" value="ECO:0007669"/>
    <property type="project" value="TreeGrafter"/>
</dbReference>
<dbReference type="GO" id="GO:0003735">
    <property type="term" value="F:structural constituent of ribosome"/>
    <property type="evidence" value="ECO:0007669"/>
    <property type="project" value="InterPro"/>
</dbReference>
<dbReference type="GO" id="GO:0006412">
    <property type="term" value="P:translation"/>
    <property type="evidence" value="ECO:0007669"/>
    <property type="project" value="UniProtKB-UniRule"/>
</dbReference>
<dbReference type="FunFam" id="2.30.30.790:FF:000001">
    <property type="entry name" value="50S ribosomal protein L19"/>
    <property type="match status" value="1"/>
</dbReference>
<dbReference type="Gene3D" id="2.30.30.790">
    <property type="match status" value="1"/>
</dbReference>
<dbReference type="HAMAP" id="MF_00402">
    <property type="entry name" value="Ribosomal_bL19"/>
    <property type="match status" value="1"/>
</dbReference>
<dbReference type="InterPro" id="IPR001857">
    <property type="entry name" value="Ribosomal_bL19"/>
</dbReference>
<dbReference type="InterPro" id="IPR018257">
    <property type="entry name" value="Ribosomal_bL19_CS"/>
</dbReference>
<dbReference type="InterPro" id="IPR038657">
    <property type="entry name" value="Ribosomal_bL19_sf"/>
</dbReference>
<dbReference type="InterPro" id="IPR008991">
    <property type="entry name" value="Translation_prot_SH3-like_sf"/>
</dbReference>
<dbReference type="NCBIfam" id="TIGR01024">
    <property type="entry name" value="rplS_bact"/>
    <property type="match status" value="1"/>
</dbReference>
<dbReference type="PANTHER" id="PTHR15680:SF9">
    <property type="entry name" value="LARGE RIBOSOMAL SUBUNIT PROTEIN BL19M"/>
    <property type="match status" value="1"/>
</dbReference>
<dbReference type="PANTHER" id="PTHR15680">
    <property type="entry name" value="RIBOSOMAL PROTEIN L19"/>
    <property type="match status" value="1"/>
</dbReference>
<dbReference type="Pfam" id="PF01245">
    <property type="entry name" value="Ribosomal_L19"/>
    <property type="match status" value="1"/>
</dbReference>
<dbReference type="PIRSF" id="PIRSF002191">
    <property type="entry name" value="Ribosomal_L19"/>
    <property type="match status" value="1"/>
</dbReference>
<dbReference type="PRINTS" id="PR00061">
    <property type="entry name" value="RIBOSOMALL19"/>
</dbReference>
<dbReference type="SUPFAM" id="SSF50104">
    <property type="entry name" value="Translation proteins SH3-like domain"/>
    <property type="match status" value="1"/>
</dbReference>
<dbReference type="PROSITE" id="PS01015">
    <property type="entry name" value="RIBOSOMAL_L19"/>
    <property type="match status" value="1"/>
</dbReference>
<name>RL19_ALBFT</name>